<name>HCP_LAMBD</name>
<protein>
    <recommendedName>
        <fullName>Head completion protein</fullName>
        <shortName>HCP</shortName>
    </recommendedName>
    <alternativeName>
        <fullName evidence="4">Head-tail joining protein W</fullName>
        <shortName>gpW</shortName>
    </alternativeName>
</protein>
<comment type="function">
    <text evidence="1 2 3">Plays a role in morphogenesis of the virion head after genome packaging. Presumably interacts with the portal vertex to stabilize the packaged DNA within the head after packaging. Probably binds to the head-tail connector protein FII.</text>
</comment>
<comment type="subunit">
    <text evidence="4">Monomer in solution, assembles into hexamers on the prohead. May bind FII and portal protein (Potential).</text>
</comment>
<comment type="subcellular location">
    <subcellularLocation>
        <location evidence="1">Virion</location>
    </subcellularLocation>
    <text evidence="2">Probably part of the head-tail connector.</text>
</comment>
<comment type="similarity">
    <text evidence="4">Belongs to the lambda phage gpW family.</text>
</comment>
<feature type="chain" id="PRO_0000077646" description="Head completion protein">
    <location>
        <begin position="1"/>
        <end position="68"/>
    </location>
</feature>
<feature type="helix" evidence="6">
    <location>
        <begin position="5"/>
        <end position="19"/>
    </location>
</feature>
<feature type="strand" evidence="6">
    <location>
        <begin position="23"/>
        <end position="28"/>
    </location>
</feature>
<feature type="strand" evidence="6">
    <location>
        <begin position="31"/>
        <end position="35"/>
    </location>
</feature>
<feature type="turn" evidence="5">
    <location>
        <begin position="37"/>
        <end position="39"/>
    </location>
</feature>
<feature type="helix" evidence="6">
    <location>
        <begin position="40"/>
        <end position="54"/>
    </location>
</feature>
<feature type="strand" evidence="6">
    <location>
        <begin position="64"/>
        <end position="67"/>
    </location>
</feature>
<organismHost>
    <name type="scientific">Escherichia coli</name>
    <dbReference type="NCBI Taxonomy" id="562"/>
</organismHost>
<reference key="1">
    <citation type="journal article" date="1982" name="J. Mol. Biol.">
        <title>Nucleotide sequence of bacteriophage lambda DNA.</title>
        <authorList>
            <person name="Sanger F."/>
            <person name="Coulson A.R."/>
            <person name="Hong G.F."/>
            <person name="Hill D.F."/>
            <person name="Petersen G.B."/>
        </authorList>
    </citation>
    <scope>NUCLEOTIDE SEQUENCE [LARGE SCALE GENOMIC DNA]</scope>
</reference>
<reference key="2">
    <citation type="journal article" date="1972" name="J. Mol. Biol.">
        <title>Head assembly steps controlled by genes F and W in bacteriophage lambda.</title>
        <authorList>
            <person name="Casjens S."/>
            <person name="Horn T."/>
            <person name="Kaiser A.D."/>
        </authorList>
    </citation>
    <scope>FUNCTION</scope>
    <scope>SUBUNIT</scope>
</reference>
<reference key="3">
    <citation type="journal article" date="2003" name="Biochem. Cell Biol.">
        <title>The product of the bacteriophage lambda W gene: purification and properties.</title>
        <authorList>
            <person name="Murialdo H."/>
            <person name="Xing X."/>
            <person name="Tzamtzis D."/>
            <person name="Haddad A."/>
            <person name="Gold M."/>
        </authorList>
    </citation>
    <scope>FUNCTION</scope>
    <scope>SUBUNIT</scope>
    <scope>SUBCELLULAR LOCATION</scope>
</reference>
<reference key="4">
    <citation type="journal article" date="2010" name="Proc. Natl. Acad. Sci. U.S.A.">
        <title>Phages have adapted the same protein fold to fulfill multiple functions in virion assembly.</title>
        <authorList>
            <person name="Cardarelli L."/>
            <person name="Pell L.G."/>
            <person name="Neudecker P."/>
            <person name="Pirani N."/>
            <person name="Liu A."/>
            <person name="Baker L.A."/>
            <person name="Rubinstein J.L."/>
            <person name="Maxwell K.L."/>
            <person name="Davidson A.R."/>
        </authorList>
    </citation>
    <scope>FUNCTION</scope>
</reference>
<reference key="5">
    <citation type="journal article" date="2001" name="J. Mol. Biol.">
        <title>The solution structure of bacteriophage lambda protein W, a small morphogenetic protein possessing a novel fold.</title>
        <authorList>
            <person name="Maxwell K.L."/>
            <person name="Yee A.A."/>
            <person name="Booth V."/>
            <person name="Arrowsmith C.H."/>
            <person name="Gold M."/>
            <person name="Davidson A.R."/>
        </authorList>
    </citation>
    <scope>STRUCTURE BY NMR</scope>
</reference>
<reference key="6">
    <citation type="journal article" date="2011" name="PLoS ONE">
        <title>Revisiting the NMR structure of the ultrafast downhill folding protein gpW from bacteriophage lambda.</title>
        <authorList>
            <person name="Sborgi L."/>
            <person name="Verma A."/>
            <person name="Munoz V."/>
            <person name="de Alba E."/>
        </authorList>
    </citation>
    <scope>STRUCTURE BY NMR OF 1-62</scope>
</reference>
<accession>P68660</accession>
<accession>P03727</accession>
<proteinExistence type="evidence at protein level"/>
<evidence type="ECO:0000269" key="1">
    <source>
    </source>
</evidence>
<evidence type="ECO:0000269" key="2">
    <source>
    </source>
</evidence>
<evidence type="ECO:0000269" key="3">
    <source>
    </source>
</evidence>
<evidence type="ECO:0000305" key="4"/>
<evidence type="ECO:0007829" key="5">
    <source>
        <dbReference type="PDB" id="1HYW"/>
    </source>
</evidence>
<evidence type="ECO:0007829" key="6">
    <source>
        <dbReference type="PDB" id="8K38"/>
    </source>
</evidence>
<gene>
    <name type="primary">W</name>
    <name type="ordered locus">lambdap03</name>
</gene>
<organism>
    <name type="scientific">Escherichia phage lambda</name>
    <name type="common">Bacteriophage lambda</name>
    <dbReference type="NCBI Taxonomy" id="2681611"/>
    <lineage>
        <taxon>Viruses</taxon>
        <taxon>Duplodnaviria</taxon>
        <taxon>Heunggongvirae</taxon>
        <taxon>Uroviricota</taxon>
        <taxon>Caudoviricetes</taxon>
        <taxon>Lambdavirus</taxon>
        <taxon>Lambdavirus lambda</taxon>
    </lineage>
</organism>
<dbReference type="EMBL" id="J02459">
    <property type="protein sequence ID" value="AAA96535.1"/>
    <property type="molecule type" value="Genomic_DNA"/>
</dbReference>
<dbReference type="PIR" id="H43008">
    <property type="entry name" value="JQBPL"/>
</dbReference>
<dbReference type="RefSeq" id="NP_040582.1">
    <property type="nucleotide sequence ID" value="NC_001416.1"/>
</dbReference>
<dbReference type="PDB" id="1HYW">
    <property type="method" value="NMR"/>
    <property type="chains" value="A=1-68"/>
</dbReference>
<dbReference type="PDB" id="2L6Q">
    <property type="method" value="NMR"/>
    <property type="chains" value="A=1-62"/>
</dbReference>
<dbReference type="PDB" id="2L6R">
    <property type="method" value="NMR"/>
    <property type="chains" value="A=1-62"/>
</dbReference>
<dbReference type="PDB" id="8K38">
    <property type="method" value="EM"/>
    <property type="resolution" value="3.20 A"/>
    <property type="chains" value="M/N/O/P/Q/R/S/T/U/V/W/X=1-68"/>
</dbReference>
<dbReference type="PDB" id="8XOW">
    <property type="method" value="EM"/>
    <property type="resolution" value="3.32 A"/>
    <property type="chains" value="W/W1/W2/W3/W4/W5/w/w1/w2/w3/w4/w5=1-68"/>
</dbReference>
<dbReference type="PDB" id="8XPM">
    <property type="method" value="EM"/>
    <property type="resolution" value="3.90 A"/>
    <property type="chains" value="W/W1/W2/W3/W4/W5/w/w1/w2/w3/w4/w5=1-68"/>
</dbReference>
<dbReference type="PDB" id="8XQB">
    <property type="method" value="EM"/>
    <property type="resolution" value="4.07 A"/>
    <property type="chains" value="W/W1/W2/W3/W4/W5/w/w1/w2/w3/w4/w5=1-68"/>
</dbReference>
<dbReference type="PDBsum" id="1HYW"/>
<dbReference type="PDBsum" id="2L6Q"/>
<dbReference type="PDBsum" id="2L6R"/>
<dbReference type="PDBsum" id="8K38"/>
<dbReference type="PDBsum" id="8XOW"/>
<dbReference type="PDBsum" id="8XPM"/>
<dbReference type="PDBsum" id="8XQB"/>
<dbReference type="BMRB" id="P68660"/>
<dbReference type="EMDB" id="EMD-36847"/>
<dbReference type="EMDB" id="EMD-38542"/>
<dbReference type="EMDB" id="EMD-38556"/>
<dbReference type="EMDB" id="EMD-38572"/>
<dbReference type="SMR" id="P68660"/>
<dbReference type="IntAct" id="P68660">
    <property type="interactions" value="1"/>
</dbReference>
<dbReference type="GeneID" id="2703525"/>
<dbReference type="KEGG" id="vg:2703525"/>
<dbReference type="EvolutionaryTrace" id="P68660"/>
<dbReference type="Proteomes" id="UP000001711">
    <property type="component" value="Genome"/>
</dbReference>
<dbReference type="GO" id="GO:0044423">
    <property type="term" value="C:virion component"/>
    <property type="evidence" value="ECO:0007669"/>
    <property type="project" value="UniProtKB-KW"/>
</dbReference>
<dbReference type="GO" id="GO:0019058">
    <property type="term" value="P:viral life cycle"/>
    <property type="evidence" value="ECO:0007669"/>
    <property type="project" value="InterPro"/>
</dbReference>
<dbReference type="Gene3D" id="3.30.1580.10">
    <property type="entry name" value="Head-to-tail joining protein W"/>
    <property type="match status" value="1"/>
</dbReference>
<dbReference type="InterPro" id="IPR004174">
    <property type="entry name" value="GpW"/>
</dbReference>
<dbReference type="InterPro" id="IPR036626">
    <property type="entry name" value="GpW_sf"/>
</dbReference>
<dbReference type="NCBIfam" id="NF047331">
    <property type="entry name" value="phage_HTJ"/>
    <property type="match status" value="1"/>
</dbReference>
<dbReference type="Pfam" id="PF02831">
    <property type="entry name" value="gpW"/>
    <property type="match status" value="1"/>
</dbReference>
<dbReference type="SUPFAM" id="SSF64210">
    <property type="entry name" value="Head-to-tail joining protein W, gpW"/>
    <property type="match status" value="1"/>
</dbReference>
<sequence>MTRQEELAAARAALHDLMTGKRVATVQKDGRRVEFTATSVSDLKKYIAELEVQTGMTQRRRGPAGFYV</sequence>
<keyword id="KW-0002">3D-structure</keyword>
<keyword id="KW-0426">Late protein</keyword>
<keyword id="KW-1185">Reference proteome</keyword>
<keyword id="KW-0118">Viral capsid assembly</keyword>
<keyword id="KW-1188">Viral release from host cell</keyword>
<keyword id="KW-0946">Virion</keyword>